<evidence type="ECO:0000255" key="1">
    <source>
        <dbReference type="PROSITE-ProRule" id="PRU00303"/>
    </source>
</evidence>
<evidence type="ECO:0000269" key="2">
    <source>
    </source>
</evidence>
<evidence type="ECO:0000303" key="3">
    <source>
    </source>
</evidence>
<evidence type="ECO:0000305" key="4"/>
<evidence type="ECO:0000305" key="5">
    <source>
    </source>
</evidence>
<accession>Q07741</accession>
<name>OPPA_LACLL</name>
<feature type="signal peptide" evidence="1">
    <location>
        <begin position="1"/>
        <end position="22"/>
    </location>
</feature>
<feature type="chain" id="PRO_0000031795" description="Oligopeptide-binding protein OppA">
    <location>
        <begin position="23"/>
        <end position="600"/>
    </location>
</feature>
<feature type="lipid moiety-binding region" description="N-palmitoyl cysteine" evidence="1">
    <location>
        <position position="23"/>
    </location>
</feature>
<feature type="lipid moiety-binding region" description="S-diacylglycerol cysteine" evidence="1">
    <location>
        <position position="23"/>
    </location>
</feature>
<keyword id="KW-1003">Cell membrane</keyword>
<keyword id="KW-0449">Lipoprotein</keyword>
<keyword id="KW-0472">Membrane</keyword>
<keyword id="KW-0564">Palmitate</keyword>
<keyword id="KW-0571">Peptide transport</keyword>
<keyword id="KW-0653">Protein transport</keyword>
<keyword id="KW-0732">Signal</keyword>
<keyword id="KW-0813">Transport</keyword>
<sequence>MNKLKVTLLASSVVLAATLLSACGSNQSSSTSTKKLKAGNFDVAYQNPDKAIKGGNLKVAYQSDSPMKAQWLSGLSNDATFATMSGPGGGQDGLFFTDSGFKFIKGGAADVALDKESKTATITLRKDLKWSDGSEVTAKDYEFTYETIANPAYGSDRWTDSLANIVGLSDYHTGKAKTISGITFPDGENGKVIKVQFKEMKPGMTQSGNGYFLETVAPYQYLKDVAPKDLASSPKTTTKPLVTGPFKPENVVAGESIKYVPNPYYWGEKPKLNSITYEVVSTAKSVAALSSSKYDIINGMVSSQYKQVKNLKGYKVLGQQAMYISLMYYNLGHYDAKNSINVQDRKTPLQDQNVRQAIGYARNVAEVDNKFSNGLSTPANSLIPPIFKQFTSSSVKGYEKQDLDKANKLLDEDGWKLNKSTGYREKDGKELSLVYAARVGDANAETIAQNYIQQWKKIGVKVSLYNGKLMEFNSWVDHMTTPPGANDWDITDGSWSLASEPSQQDLFSAAAPYNFGHFNDSEITKDLNDIDSAKSENPTYRKAAFVKYQEDMNKKAYVIPTNFMLNYTPVNKRVVGMTLDYGAMNTWSEIGVSSAKLATK</sequence>
<organism>
    <name type="scientific">Lactococcus lactis subsp. lactis</name>
    <name type="common">Streptococcus lactis</name>
    <dbReference type="NCBI Taxonomy" id="1360"/>
    <lineage>
        <taxon>Bacteria</taxon>
        <taxon>Bacillati</taxon>
        <taxon>Bacillota</taxon>
        <taxon>Bacilli</taxon>
        <taxon>Lactobacillales</taxon>
        <taxon>Streptococcaceae</taxon>
        <taxon>Lactococcus</taxon>
    </lineage>
</organism>
<comment type="function">
    <text evidence="2">Part of the ABC transporter complex OppABCDF involved in the uptake of oligopeptides (PubMed:8244921). Essential for uptake of peptides larger than three amino acids and for growth in milk (PubMed:8244921).</text>
</comment>
<comment type="subunit">
    <text evidence="5">The complex is composed of two ATP-binding proteins (OppD and OppF), two transmembrane proteins (OppB and OppC) and a solute-binding protein (OppA).</text>
</comment>
<comment type="subcellular location">
    <subcellularLocation>
        <location evidence="1">Cell membrane</location>
        <topology evidence="1">Lipid-anchor</topology>
    </subcellularLocation>
</comment>
<comment type="disruption phenotype">
    <text evidence="2">Mutant grows only on di- and tripeptides and is unable to transport the pentapeptide Leu-enkephalin.</text>
</comment>
<comment type="similarity">
    <text evidence="4">Belongs to the bacterial solute-binding protein 5 family.</text>
</comment>
<proteinExistence type="evidence at protein level"/>
<reference key="1">
    <citation type="journal article" date="1993" name="J. Bacteriol.">
        <title>Genetic and biochemical characterization of the oligopeptide transport system of Lactococcus lactis.</title>
        <authorList>
            <person name="Tynkkynen S."/>
            <person name="Buist G."/>
            <person name="Kunji E."/>
            <person name="Kok J."/>
            <person name="Poolman B."/>
            <person name="Venema G."/>
            <person name="Haandrikman A."/>
        </authorList>
    </citation>
    <scope>NUCLEOTIDE SEQUENCE [GENOMIC DNA]</scope>
    <scope>FUNCTION</scope>
    <scope>SUBUNIT</scope>
    <scope>DISRUPTION PHENOTYPE</scope>
    <source>
        <strain>SSL135</strain>
    </source>
</reference>
<protein>
    <recommendedName>
        <fullName evidence="4">Oligopeptide-binding protein OppA</fullName>
    </recommendedName>
</protein>
<gene>
    <name evidence="3" type="primary">oppA</name>
</gene>
<dbReference type="EMBL" id="L18760">
    <property type="protein sequence ID" value="AAA16167.1"/>
    <property type="molecule type" value="Unassigned_DNA"/>
</dbReference>
<dbReference type="PIR" id="E53290">
    <property type="entry name" value="E53290"/>
</dbReference>
<dbReference type="RefSeq" id="WP_011834693.1">
    <property type="nucleotide sequence ID" value="NZ_WJUQ01000082.1"/>
</dbReference>
<dbReference type="RefSeq" id="YP_004761502.1">
    <property type="nucleotide sequence ID" value="NC_015862.1"/>
</dbReference>
<dbReference type="SMR" id="Q07741"/>
<dbReference type="GO" id="GO:0043190">
    <property type="term" value="C:ATP-binding cassette (ABC) transporter complex"/>
    <property type="evidence" value="ECO:0007669"/>
    <property type="project" value="InterPro"/>
</dbReference>
<dbReference type="GO" id="GO:0042597">
    <property type="term" value="C:periplasmic space"/>
    <property type="evidence" value="ECO:0007669"/>
    <property type="project" value="UniProtKB-ARBA"/>
</dbReference>
<dbReference type="GO" id="GO:1904680">
    <property type="term" value="F:peptide transmembrane transporter activity"/>
    <property type="evidence" value="ECO:0007669"/>
    <property type="project" value="TreeGrafter"/>
</dbReference>
<dbReference type="GO" id="GO:0015833">
    <property type="term" value="P:peptide transport"/>
    <property type="evidence" value="ECO:0007669"/>
    <property type="project" value="UniProtKB-KW"/>
</dbReference>
<dbReference type="GO" id="GO:0015031">
    <property type="term" value="P:protein transport"/>
    <property type="evidence" value="ECO:0007669"/>
    <property type="project" value="UniProtKB-KW"/>
</dbReference>
<dbReference type="CDD" id="cd08510">
    <property type="entry name" value="PBP2_Lactococcal_OppA_like"/>
    <property type="match status" value="1"/>
</dbReference>
<dbReference type="Gene3D" id="3.10.105.10">
    <property type="entry name" value="Dipeptide-binding Protein, Domain 3"/>
    <property type="match status" value="1"/>
</dbReference>
<dbReference type="Gene3D" id="3.40.190.10">
    <property type="entry name" value="Periplasmic binding protein-like II"/>
    <property type="match status" value="1"/>
</dbReference>
<dbReference type="InterPro" id="IPR030678">
    <property type="entry name" value="Peptide/Ni-bd"/>
</dbReference>
<dbReference type="InterPro" id="IPR039424">
    <property type="entry name" value="SBP_5"/>
</dbReference>
<dbReference type="InterPro" id="IPR023765">
    <property type="entry name" value="SBP_5_CS"/>
</dbReference>
<dbReference type="InterPro" id="IPR000914">
    <property type="entry name" value="SBP_5_dom"/>
</dbReference>
<dbReference type="PANTHER" id="PTHR30290:SF9">
    <property type="entry name" value="OLIGOPEPTIDE-BINDING PROTEIN APPA"/>
    <property type="match status" value="1"/>
</dbReference>
<dbReference type="PANTHER" id="PTHR30290">
    <property type="entry name" value="PERIPLASMIC BINDING COMPONENT OF ABC TRANSPORTER"/>
    <property type="match status" value="1"/>
</dbReference>
<dbReference type="Pfam" id="PF00496">
    <property type="entry name" value="SBP_bac_5"/>
    <property type="match status" value="1"/>
</dbReference>
<dbReference type="PIRSF" id="PIRSF002741">
    <property type="entry name" value="MppA"/>
    <property type="match status" value="1"/>
</dbReference>
<dbReference type="SUPFAM" id="SSF53850">
    <property type="entry name" value="Periplasmic binding protein-like II"/>
    <property type="match status" value="1"/>
</dbReference>
<dbReference type="PROSITE" id="PS51257">
    <property type="entry name" value="PROKAR_LIPOPROTEIN"/>
    <property type="match status" value="1"/>
</dbReference>
<dbReference type="PROSITE" id="PS01040">
    <property type="entry name" value="SBP_BACTERIAL_5"/>
    <property type="match status" value="1"/>
</dbReference>